<accession>Q47AA4</accession>
<evidence type="ECO:0000255" key="1">
    <source>
        <dbReference type="HAMAP-Rule" id="MF_00033"/>
    </source>
</evidence>
<gene>
    <name evidence="1" type="primary">murG</name>
    <name type="ordered locus">Daro_3498</name>
</gene>
<dbReference type="EC" id="2.4.1.227" evidence="1"/>
<dbReference type="EMBL" id="CP000089">
    <property type="protein sequence ID" value="AAZ48227.1"/>
    <property type="molecule type" value="Genomic_DNA"/>
</dbReference>
<dbReference type="SMR" id="Q47AA4"/>
<dbReference type="STRING" id="159087.Daro_3498"/>
<dbReference type="CAZy" id="GT28">
    <property type="family name" value="Glycosyltransferase Family 28"/>
</dbReference>
<dbReference type="KEGG" id="dar:Daro_3498"/>
<dbReference type="eggNOG" id="COG0707">
    <property type="taxonomic scope" value="Bacteria"/>
</dbReference>
<dbReference type="HOGENOM" id="CLU_037404_2_0_4"/>
<dbReference type="OrthoDB" id="9808936at2"/>
<dbReference type="UniPathway" id="UPA00219"/>
<dbReference type="GO" id="GO:0005886">
    <property type="term" value="C:plasma membrane"/>
    <property type="evidence" value="ECO:0007669"/>
    <property type="project" value="UniProtKB-SubCell"/>
</dbReference>
<dbReference type="GO" id="GO:0051991">
    <property type="term" value="F:UDP-N-acetyl-D-glucosamine:N-acetylmuramoyl-L-alanyl-D-glutamyl-meso-2,6-diaminopimelyl-D-alanyl-D-alanine-diphosphoundecaprenol 4-beta-N-acetylglucosaminlytransferase activity"/>
    <property type="evidence" value="ECO:0007669"/>
    <property type="project" value="RHEA"/>
</dbReference>
<dbReference type="GO" id="GO:0050511">
    <property type="term" value="F:undecaprenyldiphospho-muramoylpentapeptide beta-N-acetylglucosaminyltransferase activity"/>
    <property type="evidence" value="ECO:0007669"/>
    <property type="project" value="UniProtKB-UniRule"/>
</dbReference>
<dbReference type="GO" id="GO:0005975">
    <property type="term" value="P:carbohydrate metabolic process"/>
    <property type="evidence" value="ECO:0007669"/>
    <property type="project" value="InterPro"/>
</dbReference>
<dbReference type="GO" id="GO:0051301">
    <property type="term" value="P:cell division"/>
    <property type="evidence" value="ECO:0007669"/>
    <property type="project" value="UniProtKB-KW"/>
</dbReference>
<dbReference type="GO" id="GO:0071555">
    <property type="term" value="P:cell wall organization"/>
    <property type="evidence" value="ECO:0007669"/>
    <property type="project" value="UniProtKB-KW"/>
</dbReference>
<dbReference type="GO" id="GO:0030259">
    <property type="term" value="P:lipid glycosylation"/>
    <property type="evidence" value="ECO:0007669"/>
    <property type="project" value="UniProtKB-UniRule"/>
</dbReference>
<dbReference type="GO" id="GO:0009252">
    <property type="term" value="P:peptidoglycan biosynthetic process"/>
    <property type="evidence" value="ECO:0007669"/>
    <property type="project" value="UniProtKB-UniRule"/>
</dbReference>
<dbReference type="GO" id="GO:0008360">
    <property type="term" value="P:regulation of cell shape"/>
    <property type="evidence" value="ECO:0007669"/>
    <property type="project" value="UniProtKB-KW"/>
</dbReference>
<dbReference type="CDD" id="cd03785">
    <property type="entry name" value="GT28_MurG"/>
    <property type="match status" value="1"/>
</dbReference>
<dbReference type="Gene3D" id="3.40.50.2000">
    <property type="entry name" value="Glycogen Phosphorylase B"/>
    <property type="match status" value="2"/>
</dbReference>
<dbReference type="HAMAP" id="MF_00033">
    <property type="entry name" value="MurG"/>
    <property type="match status" value="1"/>
</dbReference>
<dbReference type="InterPro" id="IPR006009">
    <property type="entry name" value="GlcNAc_MurG"/>
</dbReference>
<dbReference type="InterPro" id="IPR007235">
    <property type="entry name" value="Glyco_trans_28_C"/>
</dbReference>
<dbReference type="InterPro" id="IPR004276">
    <property type="entry name" value="GlycoTrans_28_N"/>
</dbReference>
<dbReference type="NCBIfam" id="TIGR01133">
    <property type="entry name" value="murG"/>
    <property type="match status" value="1"/>
</dbReference>
<dbReference type="PANTHER" id="PTHR21015:SF22">
    <property type="entry name" value="GLYCOSYLTRANSFERASE"/>
    <property type="match status" value="1"/>
</dbReference>
<dbReference type="PANTHER" id="PTHR21015">
    <property type="entry name" value="UDP-N-ACETYLGLUCOSAMINE--N-ACETYLMURAMYL-(PENTAPEPTIDE) PYROPHOSPHORYL-UNDECAPRENOL N-ACETYLGLUCOSAMINE TRANSFERASE 1"/>
    <property type="match status" value="1"/>
</dbReference>
<dbReference type="Pfam" id="PF04101">
    <property type="entry name" value="Glyco_tran_28_C"/>
    <property type="match status" value="1"/>
</dbReference>
<dbReference type="Pfam" id="PF03033">
    <property type="entry name" value="Glyco_transf_28"/>
    <property type="match status" value="1"/>
</dbReference>
<dbReference type="SUPFAM" id="SSF53756">
    <property type="entry name" value="UDP-Glycosyltransferase/glycogen phosphorylase"/>
    <property type="match status" value="1"/>
</dbReference>
<keyword id="KW-0131">Cell cycle</keyword>
<keyword id="KW-0132">Cell division</keyword>
<keyword id="KW-0997">Cell inner membrane</keyword>
<keyword id="KW-1003">Cell membrane</keyword>
<keyword id="KW-0133">Cell shape</keyword>
<keyword id="KW-0961">Cell wall biogenesis/degradation</keyword>
<keyword id="KW-0328">Glycosyltransferase</keyword>
<keyword id="KW-0472">Membrane</keyword>
<keyword id="KW-0573">Peptidoglycan synthesis</keyword>
<keyword id="KW-0808">Transferase</keyword>
<feature type="chain" id="PRO_0000225049" description="UDP-N-acetylglucosamine--N-acetylmuramyl-(pentapeptide) pyrophosphoryl-undecaprenol N-acetylglucosamine transferase">
    <location>
        <begin position="1"/>
        <end position="352"/>
    </location>
</feature>
<feature type="binding site" evidence="1">
    <location>
        <begin position="12"/>
        <end position="14"/>
    </location>
    <ligand>
        <name>UDP-N-acetyl-alpha-D-glucosamine</name>
        <dbReference type="ChEBI" id="CHEBI:57705"/>
    </ligand>
</feature>
<feature type="binding site" evidence="1">
    <location>
        <position position="124"/>
    </location>
    <ligand>
        <name>UDP-N-acetyl-alpha-D-glucosamine</name>
        <dbReference type="ChEBI" id="CHEBI:57705"/>
    </ligand>
</feature>
<feature type="binding site" evidence="1">
    <location>
        <position position="160"/>
    </location>
    <ligand>
        <name>UDP-N-acetyl-alpha-D-glucosamine</name>
        <dbReference type="ChEBI" id="CHEBI:57705"/>
    </ligand>
</feature>
<feature type="binding site" evidence="1">
    <location>
        <position position="188"/>
    </location>
    <ligand>
        <name>UDP-N-acetyl-alpha-D-glucosamine</name>
        <dbReference type="ChEBI" id="CHEBI:57705"/>
    </ligand>
</feature>
<feature type="binding site" evidence="1">
    <location>
        <position position="287"/>
    </location>
    <ligand>
        <name>UDP-N-acetyl-alpha-D-glucosamine</name>
        <dbReference type="ChEBI" id="CHEBI:57705"/>
    </ligand>
</feature>
<protein>
    <recommendedName>
        <fullName evidence="1">UDP-N-acetylglucosamine--N-acetylmuramyl-(pentapeptide) pyrophosphoryl-undecaprenol N-acetylglucosamine transferase</fullName>
        <ecNumber evidence="1">2.4.1.227</ecNumber>
    </recommendedName>
    <alternativeName>
        <fullName evidence="1">Undecaprenyl-PP-MurNAc-pentapeptide-UDPGlcNAc GlcNAc transferase</fullName>
    </alternativeName>
</protein>
<proteinExistence type="inferred from homology"/>
<comment type="function">
    <text evidence="1">Cell wall formation. Catalyzes the transfer of a GlcNAc subunit on undecaprenyl-pyrophosphoryl-MurNAc-pentapeptide (lipid intermediate I) to form undecaprenyl-pyrophosphoryl-MurNAc-(pentapeptide)GlcNAc (lipid intermediate II).</text>
</comment>
<comment type="catalytic activity">
    <reaction evidence="1">
        <text>di-trans,octa-cis-undecaprenyl diphospho-N-acetyl-alpha-D-muramoyl-L-alanyl-D-glutamyl-meso-2,6-diaminopimeloyl-D-alanyl-D-alanine + UDP-N-acetyl-alpha-D-glucosamine = di-trans,octa-cis-undecaprenyl diphospho-[N-acetyl-alpha-D-glucosaminyl-(1-&gt;4)]-N-acetyl-alpha-D-muramoyl-L-alanyl-D-glutamyl-meso-2,6-diaminopimeloyl-D-alanyl-D-alanine + UDP + H(+)</text>
        <dbReference type="Rhea" id="RHEA:31227"/>
        <dbReference type="ChEBI" id="CHEBI:15378"/>
        <dbReference type="ChEBI" id="CHEBI:57705"/>
        <dbReference type="ChEBI" id="CHEBI:58223"/>
        <dbReference type="ChEBI" id="CHEBI:61387"/>
        <dbReference type="ChEBI" id="CHEBI:61388"/>
        <dbReference type="EC" id="2.4.1.227"/>
    </reaction>
</comment>
<comment type="pathway">
    <text evidence="1">Cell wall biogenesis; peptidoglycan biosynthesis.</text>
</comment>
<comment type="subcellular location">
    <subcellularLocation>
        <location evidence="1">Cell inner membrane</location>
        <topology evidence="1">Peripheral membrane protein</topology>
        <orientation evidence="1">Cytoplasmic side</orientation>
    </subcellularLocation>
</comment>
<comment type="similarity">
    <text evidence="1">Belongs to the glycosyltransferase 28 family. MurG subfamily.</text>
</comment>
<organism>
    <name type="scientific">Dechloromonas aromatica (strain RCB)</name>
    <dbReference type="NCBI Taxonomy" id="159087"/>
    <lineage>
        <taxon>Bacteria</taxon>
        <taxon>Pseudomonadati</taxon>
        <taxon>Pseudomonadota</taxon>
        <taxon>Betaproteobacteria</taxon>
        <taxon>Rhodocyclales</taxon>
        <taxon>Azonexaceae</taxon>
        <taxon>Dechloromonas</taxon>
    </lineage>
</organism>
<name>MURG_DECAR</name>
<reference key="1">
    <citation type="journal article" date="2009" name="BMC Genomics">
        <title>Metabolic analysis of the soil microbe Dechloromonas aromatica str. RCB: indications of a surprisingly complex life-style and cryptic anaerobic pathways for aromatic degradation.</title>
        <authorList>
            <person name="Salinero K.K."/>
            <person name="Keller K."/>
            <person name="Feil W.S."/>
            <person name="Feil H."/>
            <person name="Trong S."/>
            <person name="Di Bartolo G."/>
            <person name="Lapidus A."/>
        </authorList>
    </citation>
    <scope>NUCLEOTIDE SEQUENCE [LARGE SCALE GENOMIC DNA]</scope>
    <source>
        <strain>RCB</strain>
    </source>
</reference>
<sequence length="352" mass="37352">MSKTILVMAGGTGGHIFPALAVAHKLRDAGWRVVWLGNPEGMEARLVPQHGFEMVWIKFSALRGKGILRKLLLPVNLLRGFWQGLKAIRQVKPNVVLGMGGYITFPGGMMAALTGVPLVLHEQNSVAGLANRVLASVADRIVTGFPDVIKNGTWVGNPVRPEIAAIAAPAERFAERTGALRLLVIGGSLGAQVLNEMVPQAMALLGESDQPQIVHQAGEKHIEALKANYAAVGVQAHCVSFVEDMAGAYEWADLVICRAGALTIAELAAAGVASILVPFPHAVDDHQTGNAKFLVHAGGAFLLPQTELTPDAIALIRNYSRSQLLEMAEKARSLAKPDATEAVAQICSEIAK</sequence>